<name>NUOC_NOVAD</name>
<proteinExistence type="inferred from homology"/>
<gene>
    <name evidence="1" type="primary">nuoC</name>
    <name type="ordered locus">Saro_2301</name>
</gene>
<comment type="function">
    <text evidence="1">NDH-1 shuttles electrons from NADH, via FMN and iron-sulfur (Fe-S) centers, to quinones in the respiratory chain. The immediate electron acceptor for the enzyme in this species is believed to be ubiquinone. Couples the redox reaction to proton translocation (for every two electrons transferred, four hydrogen ions are translocated across the cytoplasmic membrane), and thus conserves the redox energy in a proton gradient.</text>
</comment>
<comment type="catalytic activity">
    <reaction evidence="1">
        <text>a quinone + NADH + 5 H(+)(in) = a quinol + NAD(+) + 4 H(+)(out)</text>
        <dbReference type="Rhea" id="RHEA:57888"/>
        <dbReference type="ChEBI" id="CHEBI:15378"/>
        <dbReference type="ChEBI" id="CHEBI:24646"/>
        <dbReference type="ChEBI" id="CHEBI:57540"/>
        <dbReference type="ChEBI" id="CHEBI:57945"/>
        <dbReference type="ChEBI" id="CHEBI:132124"/>
    </reaction>
</comment>
<comment type="subunit">
    <text evidence="1">NDH-1 is composed of 14 different subunits. Subunits NuoB, C, D, E, F, and G constitute the peripheral sector of the complex.</text>
</comment>
<comment type="subcellular location">
    <subcellularLocation>
        <location evidence="1">Cell inner membrane</location>
        <topology evidence="1">Peripheral membrane protein</topology>
        <orientation evidence="1">Cytoplasmic side</orientation>
    </subcellularLocation>
</comment>
<comment type="similarity">
    <text evidence="1">Belongs to the complex I 30 kDa subunit family.</text>
</comment>
<evidence type="ECO:0000255" key="1">
    <source>
        <dbReference type="HAMAP-Rule" id="MF_01357"/>
    </source>
</evidence>
<evidence type="ECO:0000256" key="2">
    <source>
        <dbReference type="SAM" id="MobiDB-lite"/>
    </source>
</evidence>
<dbReference type="EC" id="7.1.1.-" evidence="1"/>
<dbReference type="EMBL" id="CP000248">
    <property type="protein sequence ID" value="ABD26738.1"/>
    <property type="molecule type" value="Genomic_DNA"/>
</dbReference>
<dbReference type="RefSeq" id="WP_011445944.1">
    <property type="nucleotide sequence ID" value="NC_007794.1"/>
</dbReference>
<dbReference type="SMR" id="Q2G5Y5"/>
<dbReference type="STRING" id="279238.Saro_2301"/>
<dbReference type="KEGG" id="nar:Saro_2301"/>
<dbReference type="eggNOG" id="COG0852">
    <property type="taxonomic scope" value="Bacteria"/>
</dbReference>
<dbReference type="HOGENOM" id="CLU_042628_2_0_5"/>
<dbReference type="Proteomes" id="UP000009134">
    <property type="component" value="Chromosome"/>
</dbReference>
<dbReference type="GO" id="GO:0005886">
    <property type="term" value="C:plasma membrane"/>
    <property type="evidence" value="ECO:0007669"/>
    <property type="project" value="UniProtKB-SubCell"/>
</dbReference>
<dbReference type="GO" id="GO:0008137">
    <property type="term" value="F:NADH dehydrogenase (ubiquinone) activity"/>
    <property type="evidence" value="ECO:0007669"/>
    <property type="project" value="InterPro"/>
</dbReference>
<dbReference type="GO" id="GO:0050136">
    <property type="term" value="F:NADH:ubiquinone reductase (non-electrogenic) activity"/>
    <property type="evidence" value="ECO:0007669"/>
    <property type="project" value="UniProtKB-UniRule"/>
</dbReference>
<dbReference type="GO" id="GO:0048038">
    <property type="term" value="F:quinone binding"/>
    <property type="evidence" value="ECO:0007669"/>
    <property type="project" value="UniProtKB-KW"/>
</dbReference>
<dbReference type="Gene3D" id="3.30.460.80">
    <property type="entry name" value="NADH:ubiquinone oxidoreductase, 30kDa subunit"/>
    <property type="match status" value="1"/>
</dbReference>
<dbReference type="HAMAP" id="MF_01357">
    <property type="entry name" value="NDH1_NuoC"/>
    <property type="match status" value="1"/>
</dbReference>
<dbReference type="InterPro" id="IPR010218">
    <property type="entry name" value="NADH_DH_suC"/>
</dbReference>
<dbReference type="InterPro" id="IPR037232">
    <property type="entry name" value="NADH_quin_OxRdtase_su_C/D-like"/>
</dbReference>
<dbReference type="InterPro" id="IPR001268">
    <property type="entry name" value="NADH_UbQ_OxRdtase_30kDa_su"/>
</dbReference>
<dbReference type="NCBIfam" id="TIGR01961">
    <property type="entry name" value="NuoC_fam"/>
    <property type="match status" value="1"/>
</dbReference>
<dbReference type="NCBIfam" id="NF004733">
    <property type="entry name" value="PRK06074.1-5"/>
    <property type="match status" value="1"/>
</dbReference>
<dbReference type="PANTHER" id="PTHR10884:SF14">
    <property type="entry name" value="NADH DEHYDROGENASE [UBIQUINONE] IRON-SULFUR PROTEIN 3, MITOCHONDRIAL"/>
    <property type="match status" value="1"/>
</dbReference>
<dbReference type="PANTHER" id="PTHR10884">
    <property type="entry name" value="NADH DEHYDROGENASE UBIQUINONE IRON-SULFUR PROTEIN 3"/>
    <property type="match status" value="1"/>
</dbReference>
<dbReference type="Pfam" id="PF00329">
    <property type="entry name" value="Complex1_30kDa"/>
    <property type="match status" value="1"/>
</dbReference>
<dbReference type="SUPFAM" id="SSF143243">
    <property type="entry name" value="Nqo5-like"/>
    <property type="match status" value="1"/>
</dbReference>
<keyword id="KW-0997">Cell inner membrane</keyword>
<keyword id="KW-1003">Cell membrane</keyword>
<keyword id="KW-0472">Membrane</keyword>
<keyword id="KW-0520">NAD</keyword>
<keyword id="KW-0874">Quinone</keyword>
<keyword id="KW-1185">Reference proteome</keyword>
<keyword id="KW-1278">Translocase</keyword>
<keyword id="KW-0813">Transport</keyword>
<keyword id="KW-0830">Ubiquinone</keyword>
<feature type="chain" id="PRO_0000358156" description="NADH-quinone oxidoreductase subunit C">
    <location>
        <begin position="1"/>
        <end position="309"/>
    </location>
</feature>
<feature type="region of interest" description="Disordered" evidence="2">
    <location>
        <begin position="198"/>
        <end position="309"/>
    </location>
</feature>
<feature type="compositionally biased region" description="Basic and acidic residues" evidence="2">
    <location>
        <begin position="220"/>
        <end position="230"/>
    </location>
</feature>
<feature type="compositionally biased region" description="Low complexity" evidence="2">
    <location>
        <begin position="246"/>
        <end position="261"/>
    </location>
</feature>
<protein>
    <recommendedName>
        <fullName evidence="1">NADH-quinone oxidoreductase subunit C</fullName>
        <ecNumber evidence="1">7.1.1.-</ecNumber>
    </recommendedName>
    <alternativeName>
        <fullName evidence="1">NADH dehydrogenase I subunit C</fullName>
    </alternativeName>
    <alternativeName>
        <fullName evidence="1">NDH-1 subunit C</fullName>
    </alternativeName>
</protein>
<reference key="1">
    <citation type="submission" date="2006-01" db="EMBL/GenBank/DDBJ databases">
        <title>Complete sequence of Novosphingobium aromaticivorans DSM 12444.</title>
        <authorList>
            <consortium name="US DOE Joint Genome Institute"/>
            <person name="Copeland A."/>
            <person name="Lucas S."/>
            <person name="Lapidus A."/>
            <person name="Barry K."/>
            <person name="Detter J.C."/>
            <person name="Glavina T."/>
            <person name="Hammon N."/>
            <person name="Israni S."/>
            <person name="Pitluck S."/>
            <person name="Chain P."/>
            <person name="Malfatti S."/>
            <person name="Shin M."/>
            <person name="Vergez L."/>
            <person name="Schmutz J."/>
            <person name="Larimer F."/>
            <person name="Land M."/>
            <person name="Kyrpides N."/>
            <person name="Ivanova N."/>
            <person name="Fredrickson J."/>
            <person name="Balkwill D."/>
            <person name="Romine M.F."/>
            <person name="Richardson P."/>
        </authorList>
    </citation>
    <scope>NUCLEOTIDE SEQUENCE [LARGE SCALE GENOMIC DNA]</scope>
    <source>
        <strain>ATCC 700278 / DSM 12444 / CCUG 56034 / CIP 105152 / NBRC 16084 / F199</strain>
    </source>
</reference>
<accession>Q2G5Y5</accession>
<organism>
    <name type="scientific">Novosphingobium aromaticivorans (strain ATCC 700278 / DSM 12444 / CCUG 56034 / CIP 105152 / NBRC 16084 / F199)</name>
    <dbReference type="NCBI Taxonomy" id="279238"/>
    <lineage>
        <taxon>Bacteria</taxon>
        <taxon>Pseudomonadati</taxon>
        <taxon>Pseudomonadota</taxon>
        <taxon>Alphaproteobacteria</taxon>
        <taxon>Sphingomonadales</taxon>
        <taxon>Sphingomonadaceae</taxon>
        <taxon>Novosphingobium</taxon>
    </lineage>
</organism>
<sequence length="309" mass="34080">MTVLHSAPRWSSNEGVLDTLVAALGDMVAASREEHGEILLTVVRDRVEDALRLLRDDHEYQQLMDIAGVDYPQRAERFDVCYCLLSVTKNHRVIVKVSTDEATPVPTVTTLWPNAGWYEREVYDMFGVLFAGNPDLRRILTDYGFQGHPFRKDFPLTGYVELRYSEEDKRVVYEPVQLAQDLRQFDFMSPWEGADYVLPGDEKAVPPPPAPAPVATAPETKGDAKADVPKTTEQPADTGAGEKANDAAAKPVAEAAAPAATKTDEPAAPEPTEDRPARKPRAKKVADTEGATEPAAKPKRTRKKKEDGE</sequence>